<reference key="1">
    <citation type="journal article" date="2006" name="Proc. Natl. Acad. Sci. U.S.A.">
        <title>The complete genome sequence of Lactobacillus bulgaricus reveals extensive and ongoing reductive evolution.</title>
        <authorList>
            <person name="van de Guchte M."/>
            <person name="Penaud S."/>
            <person name="Grimaldi C."/>
            <person name="Barbe V."/>
            <person name="Bryson K."/>
            <person name="Nicolas P."/>
            <person name="Robert C."/>
            <person name="Oztas S."/>
            <person name="Mangenot S."/>
            <person name="Couloux A."/>
            <person name="Loux V."/>
            <person name="Dervyn R."/>
            <person name="Bossy R."/>
            <person name="Bolotin A."/>
            <person name="Batto J.-M."/>
            <person name="Walunas T."/>
            <person name="Gibrat J.-F."/>
            <person name="Bessieres P."/>
            <person name="Weissenbach J."/>
            <person name="Ehrlich S.D."/>
            <person name="Maguin E."/>
        </authorList>
    </citation>
    <scope>NUCLEOTIDE SEQUENCE [LARGE SCALE GENOMIC DNA]</scope>
    <source>
        <strain>ATCC 11842 / DSM 20081 / BCRC 10696 / JCM 1002 / NBRC 13953 / NCIMB 11778 / NCTC 12712 / WDCM 00102 / Lb 14</strain>
    </source>
</reference>
<gene>
    <name evidence="1" type="primary">atpF</name>
    <name type="ordered locus">Ldb0707</name>
</gene>
<sequence length="168" mass="18519">MEFQPVFAGAEISIINTLWYLIVFSILLLAVKHYAWGPVKDMMEKRRQKVIDDLDQAASDRKKAETLANEREAALKNSRQEATQILSDAKSNAQKTGKQIVSEAMAEASAIREKAKADAAQAETDALNEAREEVADLSVTIAEKVIAKNLSAADQKDLVDQFIKGLND</sequence>
<evidence type="ECO:0000255" key="1">
    <source>
        <dbReference type="HAMAP-Rule" id="MF_01398"/>
    </source>
</evidence>
<protein>
    <recommendedName>
        <fullName evidence="1">ATP synthase subunit b</fullName>
    </recommendedName>
    <alternativeName>
        <fullName evidence="1">ATP synthase F(0) sector subunit b</fullName>
    </alternativeName>
    <alternativeName>
        <fullName evidence="1">ATPase subunit I</fullName>
    </alternativeName>
    <alternativeName>
        <fullName evidence="1">F-type ATPase subunit b</fullName>
        <shortName evidence="1">F-ATPase subunit b</shortName>
    </alternativeName>
</protein>
<feature type="chain" id="PRO_0000368541" description="ATP synthase subunit b">
    <location>
        <begin position="1"/>
        <end position="168"/>
    </location>
</feature>
<feature type="transmembrane region" description="Helical" evidence="1">
    <location>
        <begin position="11"/>
        <end position="31"/>
    </location>
</feature>
<comment type="function">
    <text evidence="1">F(1)F(0) ATP synthase produces ATP from ADP in the presence of a proton or sodium gradient. F-type ATPases consist of two structural domains, F(1) containing the extramembraneous catalytic core and F(0) containing the membrane proton channel, linked together by a central stalk and a peripheral stalk. During catalysis, ATP synthesis in the catalytic domain of F(1) is coupled via a rotary mechanism of the central stalk subunits to proton translocation.</text>
</comment>
<comment type="function">
    <text evidence="1">Component of the F(0) channel, it forms part of the peripheral stalk, linking F(1) to F(0).</text>
</comment>
<comment type="subunit">
    <text evidence="1">F-type ATPases have 2 components, F(1) - the catalytic core - and F(0) - the membrane proton channel. F(1) has five subunits: alpha(3), beta(3), gamma(1), delta(1), epsilon(1). F(0) has three main subunits: a(1), b(2) and c(10-14). The alpha and beta chains form an alternating ring which encloses part of the gamma chain. F(1) is attached to F(0) by a central stalk formed by the gamma and epsilon chains, while a peripheral stalk is formed by the delta and b chains.</text>
</comment>
<comment type="subcellular location">
    <subcellularLocation>
        <location evidence="1">Cell membrane</location>
        <topology evidence="1">Single-pass membrane protein</topology>
    </subcellularLocation>
</comment>
<comment type="similarity">
    <text evidence="1">Belongs to the ATPase B chain family.</text>
</comment>
<organism>
    <name type="scientific">Lactobacillus delbrueckii subsp. bulgaricus (strain ATCC 11842 / DSM 20081 / BCRC 10696 / JCM 1002 / NBRC 13953 / NCIMB 11778 / NCTC 12712 / WDCM 00102 / Lb 14)</name>
    <dbReference type="NCBI Taxonomy" id="390333"/>
    <lineage>
        <taxon>Bacteria</taxon>
        <taxon>Bacillati</taxon>
        <taxon>Bacillota</taxon>
        <taxon>Bacilli</taxon>
        <taxon>Lactobacillales</taxon>
        <taxon>Lactobacillaceae</taxon>
        <taxon>Lactobacillus</taxon>
    </lineage>
</organism>
<accession>Q1GAW9</accession>
<keyword id="KW-0066">ATP synthesis</keyword>
<keyword id="KW-1003">Cell membrane</keyword>
<keyword id="KW-0138">CF(0)</keyword>
<keyword id="KW-0375">Hydrogen ion transport</keyword>
<keyword id="KW-0406">Ion transport</keyword>
<keyword id="KW-0472">Membrane</keyword>
<keyword id="KW-1185">Reference proteome</keyword>
<keyword id="KW-0812">Transmembrane</keyword>
<keyword id="KW-1133">Transmembrane helix</keyword>
<keyword id="KW-0813">Transport</keyword>
<name>ATPF_LACDA</name>
<dbReference type="EMBL" id="CR954253">
    <property type="protein sequence ID" value="CAI97534.1"/>
    <property type="molecule type" value="Genomic_DNA"/>
</dbReference>
<dbReference type="RefSeq" id="WP_003619103.1">
    <property type="nucleotide sequence ID" value="NZ_JQAV01000001.1"/>
</dbReference>
<dbReference type="SMR" id="Q1GAW9"/>
<dbReference type="STRING" id="390333.Ldb0707"/>
<dbReference type="KEGG" id="ldb:Ldb0707"/>
<dbReference type="PATRIC" id="fig|390333.13.peg.94"/>
<dbReference type="eggNOG" id="COG0711">
    <property type="taxonomic scope" value="Bacteria"/>
</dbReference>
<dbReference type="HOGENOM" id="CLU_079215_4_2_9"/>
<dbReference type="BioCyc" id="LDEL390333:LDB_RS03075-MONOMER"/>
<dbReference type="Proteomes" id="UP000001259">
    <property type="component" value="Chromosome"/>
</dbReference>
<dbReference type="GO" id="GO:0005886">
    <property type="term" value="C:plasma membrane"/>
    <property type="evidence" value="ECO:0007669"/>
    <property type="project" value="UniProtKB-SubCell"/>
</dbReference>
<dbReference type="GO" id="GO:0045259">
    <property type="term" value="C:proton-transporting ATP synthase complex"/>
    <property type="evidence" value="ECO:0007669"/>
    <property type="project" value="UniProtKB-KW"/>
</dbReference>
<dbReference type="GO" id="GO:0046933">
    <property type="term" value="F:proton-transporting ATP synthase activity, rotational mechanism"/>
    <property type="evidence" value="ECO:0007669"/>
    <property type="project" value="UniProtKB-UniRule"/>
</dbReference>
<dbReference type="GO" id="GO:0046961">
    <property type="term" value="F:proton-transporting ATPase activity, rotational mechanism"/>
    <property type="evidence" value="ECO:0007669"/>
    <property type="project" value="TreeGrafter"/>
</dbReference>
<dbReference type="CDD" id="cd06503">
    <property type="entry name" value="ATP-synt_Fo_b"/>
    <property type="match status" value="1"/>
</dbReference>
<dbReference type="HAMAP" id="MF_01398">
    <property type="entry name" value="ATP_synth_b_bprime"/>
    <property type="match status" value="1"/>
</dbReference>
<dbReference type="InterPro" id="IPR002146">
    <property type="entry name" value="ATP_synth_b/b'su_bac/chlpt"/>
</dbReference>
<dbReference type="InterPro" id="IPR005864">
    <property type="entry name" value="ATP_synth_F0_bsu_bac"/>
</dbReference>
<dbReference type="InterPro" id="IPR050059">
    <property type="entry name" value="ATP_synthase_B_chain"/>
</dbReference>
<dbReference type="NCBIfam" id="TIGR01144">
    <property type="entry name" value="ATP_synt_b"/>
    <property type="match status" value="1"/>
</dbReference>
<dbReference type="PANTHER" id="PTHR33445:SF1">
    <property type="entry name" value="ATP SYNTHASE SUBUNIT B"/>
    <property type="match status" value="1"/>
</dbReference>
<dbReference type="PANTHER" id="PTHR33445">
    <property type="entry name" value="ATP SYNTHASE SUBUNIT B', CHLOROPLASTIC"/>
    <property type="match status" value="1"/>
</dbReference>
<dbReference type="Pfam" id="PF00430">
    <property type="entry name" value="ATP-synt_B"/>
    <property type="match status" value="1"/>
</dbReference>
<proteinExistence type="inferred from homology"/>